<evidence type="ECO:0000255" key="1">
    <source>
        <dbReference type="HAMAP-Rule" id="MF_00451"/>
    </source>
</evidence>
<evidence type="ECO:0000305" key="2"/>
<comment type="function">
    <text evidence="1">Major role in the synthesis of nucleoside triphosphates other than ATP. The ATP gamma phosphate is transferred to the NDP beta phosphate via a ping-pong mechanism, using a phosphorylated active-site intermediate.</text>
</comment>
<comment type="catalytic activity">
    <reaction evidence="1">
        <text>a 2'-deoxyribonucleoside 5'-diphosphate + ATP = a 2'-deoxyribonucleoside 5'-triphosphate + ADP</text>
        <dbReference type="Rhea" id="RHEA:44640"/>
        <dbReference type="ChEBI" id="CHEBI:30616"/>
        <dbReference type="ChEBI" id="CHEBI:61560"/>
        <dbReference type="ChEBI" id="CHEBI:73316"/>
        <dbReference type="ChEBI" id="CHEBI:456216"/>
        <dbReference type="EC" id="2.7.4.6"/>
    </reaction>
</comment>
<comment type="catalytic activity">
    <reaction evidence="1">
        <text>a ribonucleoside 5'-diphosphate + ATP = a ribonucleoside 5'-triphosphate + ADP</text>
        <dbReference type="Rhea" id="RHEA:18113"/>
        <dbReference type="ChEBI" id="CHEBI:30616"/>
        <dbReference type="ChEBI" id="CHEBI:57930"/>
        <dbReference type="ChEBI" id="CHEBI:61557"/>
        <dbReference type="ChEBI" id="CHEBI:456216"/>
        <dbReference type="EC" id="2.7.4.6"/>
    </reaction>
</comment>
<comment type="cofactor">
    <cofactor evidence="1">
        <name>Mg(2+)</name>
        <dbReference type="ChEBI" id="CHEBI:18420"/>
    </cofactor>
</comment>
<comment type="subcellular location">
    <subcellularLocation>
        <location evidence="1">Cytoplasm</location>
    </subcellularLocation>
</comment>
<comment type="similarity">
    <text evidence="1 2">Belongs to the NDK family.</text>
</comment>
<comment type="sequence caution" evidence="2">
    <conflict type="erroneous initiation">
        <sequence resource="EMBL-CDS" id="AAM32160"/>
    </conflict>
</comment>
<feature type="chain" id="PRO_0000137093" description="Nucleoside diphosphate kinase">
    <location>
        <begin position="1"/>
        <end position="149"/>
    </location>
</feature>
<feature type="active site" description="Pros-phosphohistidine intermediate" evidence="1">
    <location>
        <position position="115"/>
    </location>
</feature>
<feature type="binding site" evidence="1">
    <location>
        <position position="9"/>
    </location>
    <ligand>
        <name>ATP</name>
        <dbReference type="ChEBI" id="CHEBI:30616"/>
    </ligand>
</feature>
<feature type="binding site" evidence="1">
    <location>
        <position position="57"/>
    </location>
    <ligand>
        <name>ATP</name>
        <dbReference type="ChEBI" id="CHEBI:30616"/>
    </ligand>
</feature>
<feature type="binding site" evidence="1">
    <location>
        <position position="85"/>
    </location>
    <ligand>
        <name>ATP</name>
        <dbReference type="ChEBI" id="CHEBI:30616"/>
    </ligand>
</feature>
<feature type="binding site" evidence="1">
    <location>
        <position position="91"/>
    </location>
    <ligand>
        <name>ATP</name>
        <dbReference type="ChEBI" id="CHEBI:30616"/>
    </ligand>
</feature>
<feature type="binding site" evidence="1">
    <location>
        <position position="102"/>
    </location>
    <ligand>
        <name>ATP</name>
        <dbReference type="ChEBI" id="CHEBI:30616"/>
    </ligand>
</feature>
<feature type="binding site" evidence="1">
    <location>
        <position position="112"/>
    </location>
    <ligand>
        <name>ATP</name>
        <dbReference type="ChEBI" id="CHEBI:30616"/>
    </ligand>
</feature>
<keyword id="KW-0067">ATP-binding</keyword>
<keyword id="KW-0963">Cytoplasm</keyword>
<keyword id="KW-0418">Kinase</keyword>
<keyword id="KW-0460">Magnesium</keyword>
<keyword id="KW-0479">Metal-binding</keyword>
<keyword id="KW-0546">Nucleotide metabolism</keyword>
<keyword id="KW-0547">Nucleotide-binding</keyword>
<keyword id="KW-0597">Phosphoprotein</keyword>
<keyword id="KW-0808">Transferase</keyword>
<proteinExistence type="inferred from homology"/>
<reference key="1">
    <citation type="journal article" date="2002" name="J. Mol. Microbiol. Biotechnol.">
        <title>The genome of Methanosarcina mazei: evidence for lateral gene transfer between Bacteria and Archaea.</title>
        <authorList>
            <person name="Deppenmeier U."/>
            <person name="Johann A."/>
            <person name="Hartsch T."/>
            <person name="Merkl R."/>
            <person name="Schmitz R.A."/>
            <person name="Martinez-Arias R."/>
            <person name="Henne A."/>
            <person name="Wiezer A."/>
            <person name="Baeumer S."/>
            <person name="Jacobi C."/>
            <person name="Brueggemann H."/>
            <person name="Lienard T."/>
            <person name="Christmann A."/>
            <person name="Boemecke M."/>
            <person name="Steckel S."/>
            <person name="Bhattacharyya A."/>
            <person name="Lykidis A."/>
            <person name="Overbeek R."/>
            <person name="Klenk H.-P."/>
            <person name="Gunsalus R.P."/>
            <person name="Fritz H.-J."/>
            <person name="Gottschalk G."/>
        </authorList>
    </citation>
    <scope>NUCLEOTIDE SEQUENCE [LARGE SCALE GENOMIC DNA]</scope>
    <source>
        <strain>ATCC BAA-159 / DSM 3647 / Goe1 / Go1 / JCM 11833 / OCM 88</strain>
    </source>
</reference>
<name>NDK_METMA</name>
<sequence length="149" mass="16139">MEQTYVMVKPDGVQRGLVGEVISRIEKRGLKIVALRMNVIAEATAKEHYGEHAARPFFPSLIEFITSGPSVSMVVAGKDAIKVMRAINGATNPVDAAPGTIRGDFALDVGRNVVHASDSPEAAAREIAIHFKDSEIANYSRVDEVCLYE</sequence>
<dbReference type="EC" id="2.7.4.6" evidence="1"/>
<dbReference type="EMBL" id="AE008384">
    <property type="protein sequence ID" value="AAM32160.1"/>
    <property type="status" value="ALT_INIT"/>
    <property type="molecule type" value="Genomic_DNA"/>
</dbReference>
<dbReference type="SMR" id="Q8PU77"/>
<dbReference type="KEGG" id="mma:MM_2464"/>
<dbReference type="PATRIC" id="fig|192952.21.peg.2819"/>
<dbReference type="eggNOG" id="arCOG04313">
    <property type="taxonomic scope" value="Archaea"/>
</dbReference>
<dbReference type="HOGENOM" id="CLU_060216_6_3_2"/>
<dbReference type="Proteomes" id="UP000000595">
    <property type="component" value="Chromosome"/>
</dbReference>
<dbReference type="GO" id="GO:0005737">
    <property type="term" value="C:cytoplasm"/>
    <property type="evidence" value="ECO:0007669"/>
    <property type="project" value="UniProtKB-SubCell"/>
</dbReference>
<dbReference type="GO" id="GO:0005524">
    <property type="term" value="F:ATP binding"/>
    <property type="evidence" value="ECO:0007669"/>
    <property type="project" value="UniProtKB-UniRule"/>
</dbReference>
<dbReference type="GO" id="GO:0046872">
    <property type="term" value="F:metal ion binding"/>
    <property type="evidence" value="ECO:0007669"/>
    <property type="project" value="UniProtKB-KW"/>
</dbReference>
<dbReference type="GO" id="GO:0004550">
    <property type="term" value="F:nucleoside diphosphate kinase activity"/>
    <property type="evidence" value="ECO:0007669"/>
    <property type="project" value="UniProtKB-UniRule"/>
</dbReference>
<dbReference type="GO" id="GO:0006241">
    <property type="term" value="P:CTP biosynthetic process"/>
    <property type="evidence" value="ECO:0007669"/>
    <property type="project" value="UniProtKB-UniRule"/>
</dbReference>
<dbReference type="GO" id="GO:0006183">
    <property type="term" value="P:GTP biosynthetic process"/>
    <property type="evidence" value="ECO:0007669"/>
    <property type="project" value="UniProtKB-UniRule"/>
</dbReference>
<dbReference type="GO" id="GO:0006228">
    <property type="term" value="P:UTP biosynthetic process"/>
    <property type="evidence" value="ECO:0007669"/>
    <property type="project" value="UniProtKB-UniRule"/>
</dbReference>
<dbReference type="CDD" id="cd04413">
    <property type="entry name" value="NDPk_I"/>
    <property type="match status" value="1"/>
</dbReference>
<dbReference type="FunFam" id="3.30.70.141:FF:000003">
    <property type="entry name" value="Nucleoside diphosphate kinase"/>
    <property type="match status" value="1"/>
</dbReference>
<dbReference type="Gene3D" id="3.30.70.141">
    <property type="entry name" value="Nucleoside diphosphate kinase-like domain"/>
    <property type="match status" value="1"/>
</dbReference>
<dbReference type="HAMAP" id="MF_00451">
    <property type="entry name" value="NDP_kinase"/>
    <property type="match status" value="1"/>
</dbReference>
<dbReference type="InterPro" id="IPR034907">
    <property type="entry name" value="NDK-like_dom"/>
</dbReference>
<dbReference type="InterPro" id="IPR036850">
    <property type="entry name" value="NDK-like_dom_sf"/>
</dbReference>
<dbReference type="InterPro" id="IPR001564">
    <property type="entry name" value="Nucleoside_diP_kinase"/>
</dbReference>
<dbReference type="InterPro" id="IPR023005">
    <property type="entry name" value="Nucleoside_diP_kinase_AS"/>
</dbReference>
<dbReference type="NCBIfam" id="NF001908">
    <property type="entry name" value="PRK00668.1"/>
    <property type="match status" value="1"/>
</dbReference>
<dbReference type="PANTHER" id="PTHR11349">
    <property type="entry name" value="NUCLEOSIDE DIPHOSPHATE KINASE"/>
    <property type="match status" value="1"/>
</dbReference>
<dbReference type="Pfam" id="PF00334">
    <property type="entry name" value="NDK"/>
    <property type="match status" value="1"/>
</dbReference>
<dbReference type="PRINTS" id="PR01243">
    <property type="entry name" value="NUCDPKINASE"/>
</dbReference>
<dbReference type="SMART" id="SM00562">
    <property type="entry name" value="NDK"/>
    <property type="match status" value="1"/>
</dbReference>
<dbReference type="SUPFAM" id="SSF54919">
    <property type="entry name" value="Nucleoside diphosphate kinase, NDK"/>
    <property type="match status" value="1"/>
</dbReference>
<dbReference type="PROSITE" id="PS00469">
    <property type="entry name" value="NDPK"/>
    <property type="match status" value="1"/>
</dbReference>
<dbReference type="PROSITE" id="PS51374">
    <property type="entry name" value="NDPK_LIKE"/>
    <property type="match status" value="1"/>
</dbReference>
<organism>
    <name type="scientific">Methanosarcina mazei (strain ATCC BAA-159 / DSM 3647 / Goe1 / Go1 / JCM 11833 / OCM 88)</name>
    <name type="common">Methanosarcina frisia</name>
    <dbReference type="NCBI Taxonomy" id="192952"/>
    <lineage>
        <taxon>Archaea</taxon>
        <taxon>Methanobacteriati</taxon>
        <taxon>Methanobacteriota</taxon>
        <taxon>Stenosarchaea group</taxon>
        <taxon>Methanomicrobia</taxon>
        <taxon>Methanosarcinales</taxon>
        <taxon>Methanosarcinaceae</taxon>
        <taxon>Methanosarcina</taxon>
    </lineage>
</organism>
<protein>
    <recommendedName>
        <fullName evidence="1">Nucleoside diphosphate kinase</fullName>
        <shortName evidence="1">NDK</shortName>
        <shortName evidence="1">NDP kinase</shortName>
        <ecNumber evidence="1">2.7.4.6</ecNumber>
    </recommendedName>
    <alternativeName>
        <fullName evidence="1">Nucleoside-2-P kinase</fullName>
    </alternativeName>
</protein>
<gene>
    <name evidence="1" type="primary">ndk</name>
    <name type="ordered locus">MM_2464</name>
</gene>
<accession>Q8PU77</accession>